<sequence length="647" mass="74305">MIKITFPDGAVREFESGVTTFDIAESLSKSLAKKALAGKFNDQLIDTTRAIEEDGSIEIVTPDHKDAYEVLRHSAAHLFAQAAKRLFPNLHLGVGPAIAEGFYYDTDNAEGQISNEDLPRIEAEMQKIVTENYPCIREEVTKEEALELFKDDPYKVELINEHAGAGLTVYRQGEFVDLCRGPHVPSTGRIQVFHLLNVAGAYWRGNSDNNMMQRIYGTAWFDKKDLKAYLTRLEEAKERDHRKLGKELDLFMISQEVGQGLPFWLPDGATIRRTLERYITDKELASGYQHVYTPPLASVELYKTSGHWDHYQEDMFPVMDMGDGEEFVLRPMNCPHHIQVYKNHVRSYRELPIRIAELGMMHRYEKSGALSGLQRVREMTLNDGHIFVTPEQIQEEFQRALQLIIDVYADFNLTDYRFRLSYRDPNDTHKYYDNDEMWENAQSMLKAALDEMGVDYFEAEGEAAFYGPKLDIQVKTALGNEETLSTIQLDFLLPERFDLKYIGADGEEHRPVMIHRGVISTMERFTAILIETYKGAFPTWLAPHQVTVIPISNEAHIDYAWEVAKTLRDRGVRADVDDRNEKMQYKIRTSQTSKIPYQLIVGDKEMEDKSVNVRRYGSKATHTESVEEFVENILADIARKSRPDAQA</sequence>
<gene>
    <name evidence="1" type="primary">thrS</name>
    <name type="ordered locus">M6_Spy0454</name>
</gene>
<name>SYT_STRP6</name>
<reference key="1">
    <citation type="journal article" date="2004" name="J. Infect. Dis.">
        <title>Progress toward characterization of the group A Streptococcus metagenome: complete genome sequence of a macrolide-resistant serotype M6 strain.</title>
        <authorList>
            <person name="Banks D.J."/>
            <person name="Porcella S.F."/>
            <person name="Barbian K.D."/>
            <person name="Beres S.B."/>
            <person name="Philips L.E."/>
            <person name="Voyich J.M."/>
            <person name="DeLeo F.R."/>
            <person name="Martin J.M."/>
            <person name="Somerville G.A."/>
            <person name="Musser J.M."/>
        </authorList>
    </citation>
    <scope>NUCLEOTIDE SEQUENCE [LARGE SCALE GENOMIC DNA]</scope>
    <source>
        <strain>ATCC BAA-946 / MGAS10394</strain>
    </source>
</reference>
<proteinExistence type="inferred from homology"/>
<accession>Q5XDC4</accession>
<dbReference type="EC" id="6.1.1.3" evidence="1"/>
<dbReference type="EMBL" id="CP000003">
    <property type="protein sequence ID" value="AAT86589.1"/>
    <property type="molecule type" value="Genomic_DNA"/>
</dbReference>
<dbReference type="RefSeq" id="WP_011184277.1">
    <property type="nucleotide sequence ID" value="NC_006086.1"/>
</dbReference>
<dbReference type="SMR" id="Q5XDC4"/>
<dbReference type="KEGG" id="spa:M6_Spy0454"/>
<dbReference type="HOGENOM" id="CLU_008554_0_1_9"/>
<dbReference type="Proteomes" id="UP000001167">
    <property type="component" value="Chromosome"/>
</dbReference>
<dbReference type="GO" id="GO:0005737">
    <property type="term" value="C:cytoplasm"/>
    <property type="evidence" value="ECO:0007669"/>
    <property type="project" value="UniProtKB-SubCell"/>
</dbReference>
<dbReference type="GO" id="GO:0005524">
    <property type="term" value="F:ATP binding"/>
    <property type="evidence" value="ECO:0007669"/>
    <property type="project" value="UniProtKB-UniRule"/>
</dbReference>
<dbReference type="GO" id="GO:0140096">
    <property type="term" value="F:catalytic activity, acting on a protein"/>
    <property type="evidence" value="ECO:0007669"/>
    <property type="project" value="UniProtKB-ARBA"/>
</dbReference>
<dbReference type="GO" id="GO:0046872">
    <property type="term" value="F:metal ion binding"/>
    <property type="evidence" value="ECO:0007669"/>
    <property type="project" value="UniProtKB-KW"/>
</dbReference>
<dbReference type="GO" id="GO:0004829">
    <property type="term" value="F:threonine-tRNA ligase activity"/>
    <property type="evidence" value="ECO:0007669"/>
    <property type="project" value="UniProtKB-UniRule"/>
</dbReference>
<dbReference type="GO" id="GO:0016740">
    <property type="term" value="F:transferase activity"/>
    <property type="evidence" value="ECO:0007669"/>
    <property type="project" value="UniProtKB-ARBA"/>
</dbReference>
<dbReference type="GO" id="GO:0000049">
    <property type="term" value="F:tRNA binding"/>
    <property type="evidence" value="ECO:0007669"/>
    <property type="project" value="UniProtKB-KW"/>
</dbReference>
<dbReference type="GO" id="GO:0006435">
    <property type="term" value="P:threonyl-tRNA aminoacylation"/>
    <property type="evidence" value="ECO:0007669"/>
    <property type="project" value="UniProtKB-UniRule"/>
</dbReference>
<dbReference type="CDD" id="cd01667">
    <property type="entry name" value="TGS_ThrRS"/>
    <property type="match status" value="1"/>
</dbReference>
<dbReference type="CDD" id="cd00860">
    <property type="entry name" value="ThrRS_anticodon"/>
    <property type="match status" value="1"/>
</dbReference>
<dbReference type="CDD" id="cd00771">
    <property type="entry name" value="ThrRS_core"/>
    <property type="match status" value="1"/>
</dbReference>
<dbReference type="FunFam" id="3.10.20.30:FF:000005">
    <property type="entry name" value="Threonine--tRNA ligase"/>
    <property type="match status" value="1"/>
</dbReference>
<dbReference type="FunFam" id="3.30.54.20:FF:000002">
    <property type="entry name" value="Threonine--tRNA ligase"/>
    <property type="match status" value="1"/>
</dbReference>
<dbReference type="FunFam" id="3.30.930.10:FF:000002">
    <property type="entry name" value="Threonine--tRNA ligase"/>
    <property type="match status" value="1"/>
</dbReference>
<dbReference type="FunFam" id="3.40.50.800:FF:000001">
    <property type="entry name" value="Threonine--tRNA ligase"/>
    <property type="match status" value="1"/>
</dbReference>
<dbReference type="FunFam" id="3.30.980.10:FF:000005">
    <property type="entry name" value="Threonyl-tRNA synthetase, mitochondrial"/>
    <property type="match status" value="1"/>
</dbReference>
<dbReference type="Gene3D" id="3.10.20.30">
    <property type="match status" value="1"/>
</dbReference>
<dbReference type="Gene3D" id="3.30.54.20">
    <property type="match status" value="1"/>
</dbReference>
<dbReference type="Gene3D" id="3.40.50.800">
    <property type="entry name" value="Anticodon-binding domain"/>
    <property type="match status" value="1"/>
</dbReference>
<dbReference type="Gene3D" id="3.30.930.10">
    <property type="entry name" value="Bira Bifunctional Protein, Domain 2"/>
    <property type="match status" value="1"/>
</dbReference>
<dbReference type="Gene3D" id="3.30.980.10">
    <property type="entry name" value="Threonyl-trna Synthetase, Chain A, domain 2"/>
    <property type="match status" value="1"/>
</dbReference>
<dbReference type="HAMAP" id="MF_00184">
    <property type="entry name" value="Thr_tRNA_synth"/>
    <property type="match status" value="1"/>
</dbReference>
<dbReference type="InterPro" id="IPR002314">
    <property type="entry name" value="aa-tRNA-synt_IIb"/>
</dbReference>
<dbReference type="InterPro" id="IPR006195">
    <property type="entry name" value="aa-tRNA-synth_II"/>
</dbReference>
<dbReference type="InterPro" id="IPR045864">
    <property type="entry name" value="aa-tRNA-synth_II/BPL/LPL"/>
</dbReference>
<dbReference type="InterPro" id="IPR004154">
    <property type="entry name" value="Anticodon-bd"/>
</dbReference>
<dbReference type="InterPro" id="IPR036621">
    <property type="entry name" value="Anticodon-bd_dom_sf"/>
</dbReference>
<dbReference type="InterPro" id="IPR012675">
    <property type="entry name" value="Beta-grasp_dom_sf"/>
</dbReference>
<dbReference type="InterPro" id="IPR004095">
    <property type="entry name" value="TGS"/>
</dbReference>
<dbReference type="InterPro" id="IPR012676">
    <property type="entry name" value="TGS-like"/>
</dbReference>
<dbReference type="InterPro" id="IPR002320">
    <property type="entry name" value="Thr-tRNA-ligase_IIa"/>
</dbReference>
<dbReference type="InterPro" id="IPR018163">
    <property type="entry name" value="Thr/Ala-tRNA-synth_IIc_edit"/>
</dbReference>
<dbReference type="InterPro" id="IPR047246">
    <property type="entry name" value="ThrRS_anticodon"/>
</dbReference>
<dbReference type="InterPro" id="IPR033728">
    <property type="entry name" value="ThrRS_core"/>
</dbReference>
<dbReference type="InterPro" id="IPR012947">
    <property type="entry name" value="tRNA_SAD"/>
</dbReference>
<dbReference type="NCBIfam" id="TIGR00418">
    <property type="entry name" value="thrS"/>
    <property type="match status" value="1"/>
</dbReference>
<dbReference type="PANTHER" id="PTHR11451:SF56">
    <property type="entry name" value="THREONINE--TRNA LIGASE 1"/>
    <property type="match status" value="1"/>
</dbReference>
<dbReference type="PANTHER" id="PTHR11451">
    <property type="entry name" value="THREONINE-TRNA LIGASE"/>
    <property type="match status" value="1"/>
</dbReference>
<dbReference type="Pfam" id="PF03129">
    <property type="entry name" value="HGTP_anticodon"/>
    <property type="match status" value="1"/>
</dbReference>
<dbReference type="Pfam" id="PF02824">
    <property type="entry name" value="TGS"/>
    <property type="match status" value="1"/>
</dbReference>
<dbReference type="Pfam" id="PF00587">
    <property type="entry name" value="tRNA-synt_2b"/>
    <property type="match status" value="1"/>
</dbReference>
<dbReference type="Pfam" id="PF07973">
    <property type="entry name" value="tRNA_SAD"/>
    <property type="match status" value="1"/>
</dbReference>
<dbReference type="PRINTS" id="PR01047">
    <property type="entry name" value="TRNASYNTHTHR"/>
</dbReference>
<dbReference type="SMART" id="SM00863">
    <property type="entry name" value="tRNA_SAD"/>
    <property type="match status" value="1"/>
</dbReference>
<dbReference type="SUPFAM" id="SSF52954">
    <property type="entry name" value="Class II aaRS ABD-related"/>
    <property type="match status" value="1"/>
</dbReference>
<dbReference type="SUPFAM" id="SSF55681">
    <property type="entry name" value="Class II aaRS and biotin synthetases"/>
    <property type="match status" value="1"/>
</dbReference>
<dbReference type="SUPFAM" id="SSF81271">
    <property type="entry name" value="TGS-like"/>
    <property type="match status" value="1"/>
</dbReference>
<dbReference type="SUPFAM" id="SSF55186">
    <property type="entry name" value="ThrRS/AlaRS common domain"/>
    <property type="match status" value="1"/>
</dbReference>
<dbReference type="PROSITE" id="PS50862">
    <property type="entry name" value="AA_TRNA_LIGASE_II"/>
    <property type="match status" value="1"/>
</dbReference>
<dbReference type="PROSITE" id="PS51880">
    <property type="entry name" value="TGS"/>
    <property type="match status" value="1"/>
</dbReference>
<keyword id="KW-0030">Aminoacyl-tRNA synthetase</keyword>
<keyword id="KW-0067">ATP-binding</keyword>
<keyword id="KW-0963">Cytoplasm</keyword>
<keyword id="KW-0436">Ligase</keyword>
<keyword id="KW-0479">Metal-binding</keyword>
<keyword id="KW-0547">Nucleotide-binding</keyword>
<keyword id="KW-0648">Protein biosynthesis</keyword>
<keyword id="KW-0694">RNA-binding</keyword>
<keyword id="KW-0820">tRNA-binding</keyword>
<keyword id="KW-0862">Zinc</keyword>
<organism>
    <name type="scientific">Streptococcus pyogenes serotype M6 (strain ATCC BAA-946 / MGAS10394)</name>
    <dbReference type="NCBI Taxonomy" id="286636"/>
    <lineage>
        <taxon>Bacteria</taxon>
        <taxon>Bacillati</taxon>
        <taxon>Bacillota</taxon>
        <taxon>Bacilli</taxon>
        <taxon>Lactobacillales</taxon>
        <taxon>Streptococcaceae</taxon>
        <taxon>Streptococcus</taxon>
    </lineage>
</organism>
<protein>
    <recommendedName>
        <fullName evidence="1">Threonine--tRNA ligase</fullName>
        <ecNumber evidence="1">6.1.1.3</ecNumber>
    </recommendedName>
    <alternativeName>
        <fullName evidence="1">Threonyl-tRNA synthetase</fullName>
        <shortName evidence="1">ThrRS</shortName>
    </alternativeName>
</protein>
<comment type="function">
    <text evidence="1">Catalyzes the attachment of threonine to tRNA(Thr) in a two-step reaction: L-threonine is first activated by ATP to form Thr-AMP and then transferred to the acceptor end of tRNA(Thr). Also edits incorrectly charged L-seryl-tRNA(Thr).</text>
</comment>
<comment type="catalytic activity">
    <reaction evidence="1">
        <text>tRNA(Thr) + L-threonine + ATP = L-threonyl-tRNA(Thr) + AMP + diphosphate + H(+)</text>
        <dbReference type="Rhea" id="RHEA:24624"/>
        <dbReference type="Rhea" id="RHEA-COMP:9670"/>
        <dbReference type="Rhea" id="RHEA-COMP:9704"/>
        <dbReference type="ChEBI" id="CHEBI:15378"/>
        <dbReference type="ChEBI" id="CHEBI:30616"/>
        <dbReference type="ChEBI" id="CHEBI:33019"/>
        <dbReference type="ChEBI" id="CHEBI:57926"/>
        <dbReference type="ChEBI" id="CHEBI:78442"/>
        <dbReference type="ChEBI" id="CHEBI:78534"/>
        <dbReference type="ChEBI" id="CHEBI:456215"/>
        <dbReference type="EC" id="6.1.1.3"/>
    </reaction>
</comment>
<comment type="cofactor">
    <cofactor evidence="1">
        <name>Zn(2+)</name>
        <dbReference type="ChEBI" id="CHEBI:29105"/>
    </cofactor>
    <text evidence="1">Binds 1 zinc ion per subunit.</text>
</comment>
<comment type="subunit">
    <text evidence="1">Homodimer.</text>
</comment>
<comment type="subcellular location">
    <subcellularLocation>
        <location evidence="1">Cytoplasm</location>
    </subcellularLocation>
</comment>
<comment type="similarity">
    <text evidence="1">Belongs to the class-II aminoacyl-tRNA synthetase family.</text>
</comment>
<evidence type="ECO:0000255" key="1">
    <source>
        <dbReference type="HAMAP-Rule" id="MF_00184"/>
    </source>
</evidence>
<evidence type="ECO:0000255" key="2">
    <source>
        <dbReference type="PROSITE-ProRule" id="PRU01228"/>
    </source>
</evidence>
<feature type="chain" id="PRO_0000101064" description="Threonine--tRNA ligase">
    <location>
        <begin position="1"/>
        <end position="647"/>
    </location>
</feature>
<feature type="domain" description="TGS" evidence="2">
    <location>
        <begin position="1"/>
        <end position="61"/>
    </location>
</feature>
<feature type="region of interest" description="Catalytic" evidence="1">
    <location>
        <begin position="240"/>
        <end position="538"/>
    </location>
</feature>
<feature type="binding site" evidence="1">
    <location>
        <position position="334"/>
    </location>
    <ligand>
        <name>Zn(2+)</name>
        <dbReference type="ChEBI" id="CHEBI:29105"/>
    </ligand>
</feature>
<feature type="binding site" evidence="1">
    <location>
        <position position="385"/>
    </location>
    <ligand>
        <name>Zn(2+)</name>
        <dbReference type="ChEBI" id="CHEBI:29105"/>
    </ligand>
</feature>
<feature type="binding site" evidence="1">
    <location>
        <position position="515"/>
    </location>
    <ligand>
        <name>Zn(2+)</name>
        <dbReference type="ChEBI" id="CHEBI:29105"/>
    </ligand>
</feature>